<protein>
    <recommendedName>
        <fullName evidence="1">Potassium-transporting ATPase potassium-binding subunit</fullName>
    </recommendedName>
    <alternativeName>
        <fullName evidence="1">ATP phosphohydrolase [potassium-transporting] A chain</fullName>
    </alternativeName>
    <alternativeName>
        <fullName evidence="1">Potassium-binding and translocating subunit A</fullName>
    </alternativeName>
    <alternativeName>
        <fullName evidence="1">Potassium-translocating ATPase A chain</fullName>
    </alternativeName>
</protein>
<gene>
    <name evidence="1" type="primary">kdpA</name>
    <name type="ordered locus">BF0528</name>
</gene>
<reference key="1">
    <citation type="journal article" date="2005" name="Science">
        <title>Extensive DNA inversions in the B. fragilis genome control variable gene expression.</title>
        <authorList>
            <person name="Cerdeno-Tarraga A.-M."/>
            <person name="Patrick S."/>
            <person name="Crossman L.C."/>
            <person name="Blakely G."/>
            <person name="Abratt V."/>
            <person name="Lennard N."/>
            <person name="Poxton I."/>
            <person name="Duerden B."/>
            <person name="Harris B."/>
            <person name="Quail M.A."/>
            <person name="Barron A."/>
            <person name="Clark L."/>
            <person name="Corton C."/>
            <person name="Doggett J."/>
            <person name="Holden M.T.G."/>
            <person name="Larke N."/>
            <person name="Line A."/>
            <person name="Lord A."/>
            <person name="Norbertczak H."/>
            <person name="Ormond D."/>
            <person name="Price C."/>
            <person name="Rabbinowitsch E."/>
            <person name="Woodward J."/>
            <person name="Barrell B.G."/>
            <person name="Parkhill J."/>
        </authorList>
    </citation>
    <scope>NUCLEOTIDE SEQUENCE [LARGE SCALE GENOMIC DNA]</scope>
    <source>
        <strain>ATCC 25285 / DSM 2151 / CCUG 4856 / JCM 11019 / LMG 10263 / NCTC 9343 / Onslow / VPI 2553 / EN-2</strain>
    </source>
</reference>
<sequence length="568" mass="62272">MNTEILGVAVQIVLMVVLAYPLGRYIARVYKGEKTWSDFMAPIERVIYKICGINPQEEMNWKQFLKALLILNAFWFVWGMVLLVSQGWLPLNPDGNGAQTPDQAFNTCISFMVNCNLQHYSGESGLTYFTQLFVIMLFQFITAATGMAAMAGVMKSMAAKSTQTIGNFWHFLVISCTRILLPLSLVVGFILILQGTPMGFDGRMQLTTLEGQEQMVSQGPTAAIVPIKQLGTNGGGYFGVNSSHPLENPTYLTNMVECWSILIIPMAMVLALGFYTNRRKLGYSIFGVMLFAYLAGVFINVGQEMGGNPRISEMGIAQDHGAMEGKEVRLGAGATALWSVTTTVTSNGSVNGMHDSTMPLSGMVEMLNMQINTWFGGVGVGWLNYYTFIIMAVFISGLMVGRTPEFLGKKVEAREMKIATFVALLHPFVILVFTAISSYVYTHHPDFVESEGGWLNNLGFHGLSEQLYEYTSSAANNGSGFEGLGDNTYFWNWTCGIVLILSRFIPIVGQVAIAGLLAQKKFIPESAGTLKTDTVTFAVMTFAVIFIVAALSFFPVHALSTIAEHLSL</sequence>
<comment type="function">
    <text evidence="1">Part of the high-affinity ATP-driven potassium transport (or Kdp) system, which catalyzes the hydrolysis of ATP coupled with the electrogenic transport of potassium into the cytoplasm. This subunit binds the periplasmic potassium ions and delivers the ions to the membrane domain of KdpB through an intramembrane tunnel.</text>
</comment>
<comment type="subunit">
    <text evidence="1">The system is composed of three essential subunits: KdpA, KdpB and KdpC.</text>
</comment>
<comment type="subcellular location">
    <subcellularLocation>
        <location evidence="1">Cell inner membrane</location>
        <topology evidence="1">Multi-pass membrane protein</topology>
    </subcellularLocation>
</comment>
<comment type="similarity">
    <text evidence="1">Belongs to the KdpA family.</text>
</comment>
<organism>
    <name type="scientific">Bacteroides fragilis (strain ATCC 25285 / DSM 2151 / CCUG 4856 / JCM 11019 / LMG 10263 / NCTC 9343 / Onslow / VPI 2553 / EN-2)</name>
    <dbReference type="NCBI Taxonomy" id="272559"/>
    <lineage>
        <taxon>Bacteria</taxon>
        <taxon>Pseudomonadati</taxon>
        <taxon>Bacteroidota</taxon>
        <taxon>Bacteroidia</taxon>
        <taxon>Bacteroidales</taxon>
        <taxon>Bacteroidaceae</taxon>
        <taxon>Bacteroides</taxon>
    </lineage>
</organism>
<evidence type="ECO:0000255" key="1">
    <source>
        <dbReference type="HAMAP-Rule" id="MF_00275"/>
    </source>
</evidence>
<feature type="chain" id="PRO_1000114669" description="Potassium-transporting ATPase potassium-binding subunit">
    <location>
        <begin position="1"/>
        <end position="568"/>
    </location>
</feature>
<feature type="transmembrane region" description="Helical" evidence="1">
    <location>
        <begin position="3"/>
        <end position="23"/>
    </location>
</feature>
<feature type="transmembrane region" description="Helical" evidence="1">
    <location>
        <begin position="64"/>
        <end position="84"/>
    </location>
</feature>
<feature type="transmembrane region" description="Helical" evidence="1">
    <location>
        <begin position="133"/>
        <end position="153"/>
    </location>
</feature>
<feature type="transmembrane region" description="Helical" evidence="1">
    <location>
        <begin position="179"/>
        <end position="199"/>
    </location>
</feature>
<feature type="transmembrane region" description="Helical" evidence="1">
    <location>
        <begin position="255"/>
        <end position="275"/>
    </location>
</feature>
<feature type="transmembrane region" description="Helical" evidence="1">
    <location>
        <begin position="281"/>
        <end position="301"/>
    </location>
</feature>
<feature type="transmembrane region" description="Helical" evidence="1">
    <location>
        <begin position="375"/>
        <end position="395"/>
    </location>
</feature>
<feature type="transmembrane region" description="Helical" evidence="1">
    <location>
        <begin position="418"/>
        <end position="438"/>
    </location>
</feature>
<feature type="transmembrane region" description="Helical" evidence="1">
    <location>
        <begin position="497"/>
        <end position="517"/>
    </location>
</feature>
<feature type="transmembrane region" description="Helical" evidence="1">
    <location>
        <begin position="535"/>
        <end position="555"/>
    </location>
</feature>
<keyword id="KW-0997">Cell inner membrane</keyword>
<keyword id="KW-1003">Cell membrane</keyword>
<keyword id="KW-0406">Ion transport</keyword>
<keyword id="KW-0472">Membrane</keyword>
<keyword id="KW-0630">Potassium</keyword>
<keyword id="KW-0633">Potassium transport</keyword>
<keyword id="KW-0812">Transmembrane</keyword>
<keyword id="KW-1133">Transmembrane helix</keyword>
<keyword id="KW-0813">Transport</keyword>
<name>KDPA_BACFN</name>
<dbReference type="EMBL" id="CR626927">
    <property type="protein sequence ID" value="CAH06283.1"/>
    <property type="molecule type" value="Genomic_DNA"/>
</dbReference>
<dbReference type="RefSeq" id="WP_008658368.1">
    <property type="nucleotide sequence ID" value="NZ_UFTH01000001.1"/>
</dbReference>
<dbReference type="SMR" id="Q5LHU7"/>
<dbReference type="PaxDb" id="272559-BF9343_0504"/>
<dbReference type="GeneID" id="60369112"/>
<dbReference type="KEGG" id="bfs:BF9343_0504"/>
<dbReference type="eggNOG" id="COG2060">
    <property type="taxonomic scope" value="Bacteria"/>
</dbReference>
<dbReference type="HOGENOM" id="CLU_018614_3_0_10"/>
<dbReference type="Proteomes" id="UP000006731">
    <property type="component" value="Chromosome"/>
</dbReference>
<dbReference type="GO" id="GO:0005886">
    <property type="term" value="C:plasma membrane"/>
    <property type="evidence" value="ECO:0007669"/>
    <property type="project" value="UniProtKB-SubCell"/>
</dbReference>
<dbReference type="GO" id="GO:0008556">
    <property type="term" value="F:P-type potassium transmembrane transporter activity"/>
    <property type="evidence" value="ECO:0007669"/>
    <property type="project" value="InterPro"/>
</dbReference>
<dbReference type="GO" id="GO:0030955">
    <property type="term" value="F:potassium ion binding"/>
    <property type="evidence" value="ECO:0007669"/>
    <property type="project" value="UniProtKB-UniRule"/>
</dbReference>
<dbReference type="HAMAP" id="MF_00275">
    <property type="entry name" value="KdpA"/>
    <property type="match status" value="1"/>
</dbReference>
<dbReference type="InterPro" id="IPR004623">
    <property type="entry name" value="KdpA"/>
</dbReference>
<dbReference type="NCBIfam" id="TIGR00680">
    <property type="entry name" value="kdpA"/>
    <property type="match status" value="1"/>
</dbReference>
<dbReference type="PANTHER" id="PTHR30607">
    <property type="entry name" value="POTASSIUM-TRANSPORTING ATPASE A CHAIN"/>
    <property type="match status" value="1"/>
</dbReference>
<dbReference type="PANTHER" id="PTHR30607:SF2">
    <property type="entry name" value="POTASSIUM-TRANSPORTING ATPASE POTASSIUM-BINDING SUBUNIT"/>
    <property type="match status" value="1"/>
</dbReference>
<dbReference type="Pfam" id="PF03814">
    <property type="entry name" value="KdpA"/>
    <property type="match status" value="1"/>
</dbReference>
<dbReference type="PIRSF" id="PIRSF001294">
    <property type="entry name" value="K_ATPaseA"/>
    <property type="match status" value="1"/>
</dbReference>
<proteinExistence type="inferred from homology"/>
<accession>Q5LHU7</accession>